<protein>
    <recommendedName>
        <fullName evidence="1">Probable nicotinate-nucleotide adenylyltransferase</fullName>
        <ecNumber evidence="1">2.7.7.18</ecNumber>
    </recommendedName>
    <alternativeName>
        <fullName evidence="1">Deamido-NAD(+) diphosphorylase</fullName>
    </alternativeName>
    <alternativeName>
        <fullName evidence="1">Deamido-NAD(+) pyrophosphorylase</fullName>
    </alternativeName>
    <alternativeName>
        <fullName evidence="1">Nicotinate mononucleotide adenylyltransferase</fullName>
        <shortName evidence="1">NaMN adenylyltransferase</shortName>
    </alternativeName>
</protein>
<keyword id="KW-0067">ATP-binding</keyword>
<keyword id="KW-0520">NAD</keyword>
<keyword id="KW-0547">Nucleotide-binding</keyword>
<keyword id="KW-0548">Nucleotidyltransferase</keyword>
<keyword id="KW-0662">Pyridine nucleotide biosynthesis</keyword>
<keyword id="KW-0808">Transferase</keyword>
<feature type="chain" id="PRO_1000100791" description="Probable nicotinate-nucleotide adenylyltransferase">
    <location>
        <begin position="1"/>
        <end position="213"/>
    </location>
</feature>
<accession>B5R7Z3</accession>
<evidence type="ECO:0000255" key="1">
    <source>
        <dbReference type="HAMAP-Rule" id="MF_00244"/>
    </source>
</evidence>
<comment type="function">
    <text evidence="1">Catalyzes the reversible adenylation of nicotinate mononucleotide (NaMN) to nicotinic acid adenine dinucleotide (NaAD).</text>
</comment>
<comment type="catalytic activity">
    <reaction evidence="1">
        <text>nicotinate beta-D-ribonucleotide + ATP + H(+) = deamido-NAD(+) + diphosphate</text>
        <dbReference type="Rhea" id="RHEA:22860"/>
        <dbReference type="ChEBI" id="CHEBI:15378"/>
        <dbReference type="ChEBI" id="CHEBI:30616"/>
        <dbReference type="ChEBI" id="CHEBI:33019"/>
        <dbReference type="ChEBI" id="CHEBI:57502"/>
        <dbReference type="ChEBI" id="CHEBI:58437"/>
        <dbReference type="EC" id="2.7.7.18"/>
    </reaction>
</comment>
<comment type="pathway">
    <text evidence="1">Cofactor biosynthesis; NAD(+) biosynthesis; deamido-NAD(+) from nicotinate D-ribonucleotide: step 1/1.</text>
</comment>
<comment type="similarity">
    <text evidence="1">Belongs to the NadD family.</text>
</comment>
<reference key="1">
    <citation type="journal article" date="2008" name="Genome Res.">
        <title>Comparative genome analysis of Salmonella enteritidis PT4 and Salmonella gallinarum 287/91 provides insights into evolutionary and host adaptation pathways.</title>
        <authorList>
            <person name="Thomson N.R."/>
            <person name="Clayton D.J."/>
            <person name="Windhorst D."/>
            <person name="Vernikos G."/>
            <person name="Davidson S."/>
            <person name="Churcher C."/>
            <person name="Quail M.A."/>
            <person name="Stevens M."/>
            <person name="Jones M.A."/>
            <person name="Watson M."/>
            <person name="Barron A."/>
            <person name="Layton A."/>
            <person name="Pickard D."/>
            <person name="Kingsley R.A."/>
            <person name="Bignell A."/>
            <person name="Clark L."/>
            <person name="Harris B."/>
            <person name="Ormond D."/>
            <person name="Abdellah Z."/>
            <person name="Brooks K."/>
            <person name="Cherevach I."/>
            <person name="Chillingworth T."/>
            <person name="Woodward J."/>
            <person name="Norberczak H."/>
            <person name="Lord A."/>
            <person name="Arrowsmith C."/>
            <person name="Jagels K."/>
            <person name="Moule S."/>
            <person name="Mungall K."/>
            <person name="Saunders M."/>
            <person name="Whitehead S."/>
            <person name="Chabalgoity J.A."/>
            <person name="Maskell D."/>
            <person name="Humphreys T."/>
            <person name="Roberts M."/>
            <person name="Barrow P.A."/>
            <person name="Dougan G."/>
            <person name="Parkhill J."/>
        </authorList>
    </citation>
    <scope>NUCLEOTIDE SEQUENCE [LARGE SCALE GENOMIC DNA]</scope>
    <source>
        <strain>287/91 / NCTC 13346</strain>
    </source>
</reference>
<sequence>MKSLQALFGGTFDPVHYGHLKPVETLANLIGLSRVIIMPNNVPPHRPQPEASSAQRKYMLELAIDDKPLFTLDERELQRNAPSYTAQTLKAWREEQGPEAPLAFIIGQDSLLNFPTWHDYDTILDNTHLIVCRRPGYPLEMTQAQHQQWLEQHLTHTPDDLHQLPAGKIYLAETPWLNISATLIRERLEKGESCDDLLPENVLNYINQQGLYR</sequence>
<organism>
    <name type="scientific">Salmonella gallinarum (strain 287/91 / NCTC 13346)</name>
    <dbReference type="NCBI Taxonomy" id="550538"/>
    <lineage>
        <taxon>Bacteria</taxon>
        <taxon>Pseudomonadati</taxon>
        <taxon>Pseudomonadota</taxon>
        <taxon>Gammaproteobacteria</taxon>
        <taxon>Enterobacterales</taxon>
        <taxon>Enterobacteriaceae</taxon>
        <taxon>Salmonella</taxon>
    </lineage>
</organism>
<dbReference type="EC" id="2.7.7.18" evidence="1"/>
<dbReference type="EMBL" id="AM933173">
    <property type="protein sequence ID" value="CAR36545.1"/>
    <property type="molecule type" value="Genomic_DNA"/>
</dbReference>
<dbReference type="RefSeq" id="WP_001675307.1">
    <property type="nucleotide sequence ID" value="NC_011274.1"/>
</dbReference>
<dbReference type="SMR" id="B5R7Z3"/>
<dbReference type="KEGG" id="seg:SG0649"/>
<dbReference type="HOGENOM" id="CLU_069765_0_0_6"/>
<dbReference type="UniPathway" id="UPA00253">
    <property type="reaction ID" value="UER00332"/>
</dbReference>
<dbReference type="Proteomes" id="UP000008321">
    <property type="component" value="Chromosome"/>
</dbReference>
<dbReference type="GO" id="GO:0005524">
    <property type="term" value="F:ATP binding"/>
    <property type="evidence" value="ECO:0007669"/>
    <property type="project" value="UniProtKB-KW"/>
</dbReference>
<dbReference type="GO" id="GO:0004515">
    <property type="term" value="F:nicotinate-nucleotide adenylyltransferase activity"/>
    <property type="evidence" value="ECO:0007669"/>
    <property type="project" value="UniProtKB-UniRule"/>
</dbReference>
<dbReference type="GO" id="GO:0009435">
    <property type="term" value="P:NAD biosynthetic process"/>
    <property type="evidence" value="ECO:0007669"/>
    <property type="project" value="UniProtKB-UniRule"/>
</dbReference>
<dbReference type="CDD" id="cd02165">
    <property type="entry name" value="NMNAT"/>
    <property type="match status" value="1"/>
</dbReference>
<dbReference type="FunFam" id="3.40.50.620:FF:000039">
    <property type="entry name" value="Probable nicotinate-nucleotide adenylyltransferase"/>
    <property type="match status" value="1"/>
</dbReference>
<dbReference type="Gene3D" id="3.40.50.620">
    <property type="entry name" value="HUPs"/>
    <property type="match status" value="1"/>
</dbReference>
<dbReference type="HAMAP" id="MF_00244">
    <property type="entry name" value="NaMN_adenylyltr"/>
    <property type="match status" value="1"/>
</dbReference>
<dbReference type="InterPro" id="IPR004821">
    <property type="entry name" value="Cyt_trans-like"/>
</dbReference>
<dbReference type="InterPro" id="IPR005248">
    <property type="entry name" value="NadD/NMNAT"/>
</dbReference>
<dbReference type="InterPro" id="IPR014729">
    <property type="entry name" value="Rossmann-like_a/b/a_fold"/>
</dbReference>
<dbReference type="NCBIfam" id="TIGR00125">
    <property type="entry name" value="cyt_tran_rel"/>
    <property type="match status" value="1"/>
</dbReference>
<dbReference type="NCBIfam" id="TIGR00482">
    <property type="entry name" value="nicotinate (nicotinamide) nucleotide adenylyltransferase"/>
    <property type="match status" value="1"/>
</dbReference>
<dbReference type="NCBIfam" id="NF000839">
    <property type="entry name" value="PRK00071.1-1"/>
    <property type="match status" value="1"/>
</dbReference>
<dbReference type="NCBIfam" id="NF000840">
    <property type="entry name" value="PRK00071.1-3"/>
    <property type="match status" value="1"/>
</dbReference>
<dbReference type="PANTHER" id="PTHR39321">
    <property type="entry name" value="NICOTINATE-NUCLEOTIDE ADENYLYLTRANSFERASE-RELATED"/>
    <property type="match status" value="1"/>
</dbReference>
<dbReference type="PANTHER" id="PTHR39321:SF3">
    <property type="entry name" value="PHOSPHOPANTETHEINE ADENYLYLTRANSFERASE"/>
    <property type="match status" value="1"/>
</dbReference>
<dbReference type="Pfam" id="PF01467">
    <property type="entry name" value="CTP_transf_like"/>
    <property type="match status" value="1"/>
</dbReference>
<dbReference type="SUPFAM" id="SSF52374">
    <property type="entry name" value="Nucleotidylyl transferase"/>
    <property type="match status" value="1"/>
</dbReference>
<gene>
    <name evidence="1" type="primary">nadD</name>
    <name type="ordered locus">SG0649</name>
</gene>
<name>NADD_SALG2</name>
<proteinExistence type="inferred from homology"/>